<sequence length="174" mass="19766">MEWKDIKGYEGHYQVSNTGEVYSIKSGKTLKHQIPKDGYHRIGLFKGGKGKTFQVHRLVAIHFCEGYEEGLVVDHKDGNKDNNLSTNLRWVTQKINVENQMSRGTLNVSKAQQIAKIKNQKPIIVISPDGIEKEYPSTKCACEELGLTRGKVTDVLKGHRIHHKGYTFRYKLNG</sequence>
<evidence type="ECO:0007829" key="1">
    <source>
        <dbReference type="PDB" id="1U3E"/>
    </source>
</evidence>
<keyword id="KW-0002">3D-structure</keyword>
<keyword id="KW-0255">Endonuclease</keyword>
<keyword id="KW-0378">Hydrolase</keyword>
<keyword id="KW-0404">Intron homing</keyword>
<keyword id="KW-0540">Nuclease</keyword>
<reference key="1">
    <citation type="journal article" date="1990" name="Cell">
        <title>A self-splicing group I intron in the DNA polymerase gene of Bacillus subtilis bacteriophage SPO1.</title>
        <authorList>
            <person name="Goodrich-Blair H."/>
            <person name="Scarlato V."/>
            <person name="Gott J.M."/>
            <person name="Xu M.Q."/>
            <person name="Shub D.A."/>
        </authorList>
    </citation>
    <scope>NUCLEOTIDE SEQUENCE [GENOMIC DNA]</scope>
</reference>
<reference key="2">
    <citation type="journal article" date="2004" name="J. Mol. Biol.">
        <title>DNA binding and cleavage by the HNH homing endonuclease I-HmuI.</title>
        <authorList>
            <person name="Shen B.W."/>
            <person name="Landthaler M."/>
            <person name="Shub D.A."/>
            <person name="Stoddard B.L."/>
        </authorList>
    </citation>
    <scope>X-RAY CRYSTALLOGRAPHY (2.92 ANGSTROMS)</scope>
</reference>
<protein>
    <recommendedName>
        <fullName>DNA endonuclease I-HmuI</fullName>
        <ecNumber>3.1.-.-</ecNumber>
    </recommendedName>
    <alternativeName>
        <fullName>HNH homing endonuclease I-HmuI</fullName>
    </alternativeName>
</protein>
<dbReference type="EC" id="3.1.-.-"/>
<dbReference type="EMBL" id="M37686">
    <property type="protein sequence ID" value="AAA64536.1"/>
    <property type="molecule type" value="Genomic_DNA"/>
</dbReference>
<dbReference type="PIR" id="A36077">
    <property type="entry name" value="A36077"/>
</dbReference>
<dbReference type="RefSeq" id="YP_002300418.1">
    <property type="nucleotide sequence ID" value="NC_011421.1"/>
</dbReference>
<dbReference type="PDB" id="1U3E">
    <property type="method" value="X-ray"/>
    <property type="resolution" value="2.92 A"/>
    <property type="chains" value="M=1-174"/>
</dbReference>
<dbReference type="PDBsum" id="1U3E"/>
<dbReference type="SMR" id="P34081"/>
<dbReference type="REBASE" id="2628">
    <property type="entry name" value="I-HmuI"/>
</dbReference>
<dbReference type="GeneID" id="7009136"/>
<dbReference type="KEGG" id="vg:7009136"/>
<dbReference type="EvolutionaryTrace" id="P34081"/>
<dbReference type="GO" id="GO:0004519">
    <property type="term" value="F:endonuclease activity"/>
    <property type="evidence" value="ECO:0007669"/>
    <property type="project" value="UniProtKB-KW"/>
</dbReference>
<dbReference type="GO" id="GO:0006314">
    <property type="term" value="P:intron homing"/>
    <property type="evidence" value="ECO:0007669"/>
    <property type="project" value="UniProtKB-KW"/>
</dbReference>
<dbReference type="Gene3D" id="3.90.75.20">
    <property type="match status" value="1"/>
</dbReference>
<dbReference type="Gene3D" id="1.10.10.10">
    <property type="entry name" value="Winged helix-like DNA-binding domain superfamily/Winged helix DNA-binding domain"/>
    <property type="match status" value="1"/>
</dbReference>
<dbReference type="InterPro" id="IPR044925">
    <property type="entry name" value="His-Me_finger_sf"/>
</dbReference>
<dbReference type="InterPro" id="IPR003615">
    <property type="entry name" value="HNH_nuc"/>
</dbReference>
<dbReference type="InterPro" id="IPR054307">
    <property type="entry name" value="I-HmuI_NUMOD-like"/>
</dbReference>
<dbReference type="InterPro" id="IPR003647">
    <property type="entry name" value="Intron_nuc_1_rpt"/>
</dbReference>
<dbReference type="InterPro" id="IPR010902">
    <property type="entry name" value="NUMOD4"/>
</dbReference>
<dbReference type="InterPro" id="IPR036388">
    <property type="entry name" value="WH-like_DNA-bd_sf"/>
</dbReference>
<dbReference type="Pfam" id="PF13392">
    <property type="entry name" value="HNH_3"/>
    <property type="match status" value="1"/>
</dbReference>
<dbReference type="Pfam" id="PF22083">
    <property type="entry name" value="I-HmuI_NUMOD-like"/>
    <property type="match status" value="1"/>
</dbReference>
<dbReference type="Pfam" id="PF07463">
    <property type="entry name" value="NUMOD4"/>
    <property type="match status" value="1"/>
</dbReference>
<dbReference type="SMART" id="SM00507">
    <property type="entry name" value="HNHc"/>
    <property type="match status" value="1"/>
</dbReference>
<dbReference type="SMART" id="SM00497">
    <property type="entry name" value="IENR1"/>
    <property type="match status" value="1"/>
</dbReference>
<dbReference type="SUPFAM" id="SSF64496">
    <property type="entry name" value="DNA-binding domain of intron-encoded endonucleases"/>
    <property type="match status" value="1"/>
</dbReference>
<dbReference type="SUPFAM" id="SSF54060">
    <property type="entry name" value="His-Me finger endonucleases"/>
    <property type="match status" value="1"/>
</dbReference>
<organismHost>
    <name type="scientific">Bacillus subtilis</name>
    <dbReference type="NCBI Taxonomy" id="1423"/>
</organismHost>
<name>HMUI_BPSP1</name>
<proteinExistence type="evidence at protein level"/>
<accession>P34081</accession>
<feature type="chain" id="PRO_0000106168" description="DNA endonuclease I-HmuI">
    <location>
        <begin position="1"/>
        <end position="174"/>
    </location>
</feature>
<feature type="strand" evidence="1">
    <location>
        <begin position="3"/>
        <end position="5"/>
    </location>
</feature>
<feature type="turn" evidence="1">
    <location>
        <begin position="10"/>
        <end position="12"/>
    </location>
</feature>
<feature type="strand" evidence="1">
    <location>
        <begin position="13"/>
        <end position="16"/>
    </location>
</feature>
<feature type="strand" evidence="1">
    <location>
        <begin position="21"/>
        <end position="26"/>
    </location>
</feature>
<feature type="strand" evidence="1">
    <location>
        <begin position="28"/>
        <end position="30"/>
    </location>
</feature>
<feature type="strand" evidence="1">
    <location>
        <begin position="41"/>
        <end position="46"/>
    </location>
</feature>
<feature type="strand" evidence="1">
    <location>
        <begin position="49"/>
        <end position="54"/>
    </location>
</feature>
<feature type="helix" evidence="1">
    <location>
        <begin position="55"/>
        <end position="63"/>
    </location>
</feature>
<feature type="strand" evidence="1">
    <location>
        <begin position="72"/>
        <end position="75"/>
    </location>
</feature>
<feature type="helix" evidence="1">
    <location>
        <begin position="85"/>
        <end position="87"/>
    </location>
</feature>
<feature type="strand" evidence="1">
    <location>
        <begin position="88"/>
        <end position="91"/>
    </location>
</feature>
<feature type="helix" evidence="1">
    <location>
        <begin position="93"/>
        <end position="103"/>
    </location>
</feature>
<feature type="helix" evidence="1">
    <location>
        <begin position="109"/>
        <end position="118"/>
    </location>
</feature>
<feature type="strand" evidence="1">
    <location>
        <begin position="123"/>
        <end position="126"/>
    </location>
</feature>
<feature type="strand" evidence="1">
    <location>
        <begin position="132"/>
        <end position="136"/>
    </location>
</feature>
<feature type="helix" evidence="1">
    <location>
        <begin position="138"/>
        <end position="145"/>
    </location>
</feature>
<feature type="helix" evidence="1">
    <location>
        <begin position="149"/>
        <end position="156"/>
    </location>
</feature>
<feature type="strand" evidence="1">
    <location>
        <begin position="159"/>
        <end position="161"/>
    </location>
</feature>
<feature type="strand" evidence="1">
    <location>
        <begin position="166"/>
        <end position="170"/>
    </location>
</feature>
<organism>
    <name type="scientific">Bacillus phage SP01</name>
    <name type="common">Bacteriophage SP01</name>
    <dbReference type="NCBI Taxonomy" id="2884427"/>
    <lineage>
        <taxon>Viruses</taxon>
        <taxon>Duplodnaviria</taxon>
        <taxon>Heunggongvirae</taxon>
        <taxon>Uroviricota</taxon>
        <taxon>Caudoviricetes</taxon>
        <taxon>Herelleviridae</taxon>
        <taxon>Spounavirinae</taxon>
        <taxon>Okubovirus</taxon>
        <taxon>Okubovirus SPO1</taxon>
    </lineage>
</organism>